<organism>
    <name type="scientific">Janthinobacterium sp. (strain Marseille)</name>
    <name type="common">Minibacterium massiliensis</name>
    <dbReference type="NCBI Taxonomy" id="375286"/>
    <lineage>
        <taxon>Bacteria</taxon>
        <taxon>Pseudomonadati</taxon>
        <taxon>Pseudomonadota</taxon>
        <taxon>Betaproteobacteria</taxon>
        <taxon>Burkholderiales</taxon>
        <taxon>Oxalobacteraceae</taxon>
        <taxon>Janthinobacterium</taxon>
    </lineage>
</organism>
<dbReference type="EC" id="6.1.1.3" evidence="1"/>
<dbReference type="EMBL" id="CP000269">
    <property type="protein sequence ID" value="ABR88953.1"/>
    <property type="molecule type" value="Genomic_DNA"/>
</dbReference>
<dbReference type="RefSeq" id="WP_012079343.1">
    <property type="nucleotide sequence ID" value="NC_009659.1"/>
</dbReference>
<dbReference type="SMR" id="A6SY30"/>
<dbReference type="STRING" id="375286.mma_1487"/>
<dbReference type="KEGG" id="mms:mma_1487"/>
<dbReference type="eggNOG" id="COG0441">
    <property type="taxonomic scope" value="Bacteria"/>
</dbReference>
<dbReference type="HOGENOM" id="CLU_008554_0_1_4"/>
<dbReference type="OrthoDB" id="9802304at2"/>
<dbReference type="Proteomes" id="UP000006388">
    <property type="component" value="Chromosome"/>
</dbReference>
<dbReference type="GO" id="GO:0005829">
    <property type="term" value="C:cytosol"/>
    <property type="evidence" value="ECO:0007669"/>
    <property type="project" value="TreeGrafter"/>
</dbReference>
<dbReference type="GO" id="GO:0005524">
    <property type="term" value="F:ATP binding"/>
    <property type="evidence" value="ECO:0007669"/>
    <property type="project" value="UniProtKB-UniRule"/>
</dbReference>
<dbReference type="GO" id="GO:0046872">
    <property type="term" value="F:metal ion binding"/>
    <property type="evidence" value="ECO:0007669"/>
    <property type="project" value="UniProtKB-KW"/>
</dbReference>
<dbReference type="GO" id="GO:0004829">
    <property type="term" value="F:threonine-tRNA ligase activity"/>
    <property type="evidence" value="ECO:0007669"/>
    <property type="project" value="UniProtKB-UniRule"/>
</dbReference>
<dbReference type="GO" id="GO:0000049">
    <property type="term" value="F:tRNA binding"/>
    <property type="evidence" value="ECO:0007669"/>
    <property type="project" value="UniProtKB-KW"/>
</dbReference>
<dbReference type="GO" id="GO:0006435">
    <property type="term" value="P:threonyl-tRNA aminoacylation"/>
    <property type="evidence" value="ECO:0007669"/>
    <property type="project" value="UniProtKB-UniRule"/>
</dbReference>
<dbReference type="CDD" id="cd01667">
    <property type="entry name" value="TGS_ThrRS"/>
    <property type="match status" value="1"/>
</dbReference>
<dbReference type="CDD" id="cd00860">
    <property type="entry name" value="ThrRS_anticodon"/>
    <property type="match status" value="1"/>
</dbReference>
<dbReference type="CDD" id="cd00771">
    <property type="entry name" value="ThrRS_core"/>
    <property type="match status" value="1"/>
</dbReference>
<dbReference type="FunFam" id="3.10.20.30:FF:000005">
    <property type="entry name" value="Threonine--tRNA ligase"/>
    <property type="match status" value="1"/>
</dbReference>
<dbReference type="FunFam" id="3.30.54.20:FF:000002">
    <property type="entry name" value="Threonine--tRNA ligase"/>
    <property type="match status" value="1"/>
</dbReference>
<dbReference type="FunFam" id="3.30.930.10:FF:000002">
    <property type="entry name" value="Threonine--tRNA ligase"/>
    <property type="match status" value="1"/>
</dbReference>
<dbReference type="FunFam" id="3.40.50.800:FF:000001">
    <property type="entry name" value="Threonine--tRNA ligase"/>
    <property type="match status" value="1"/>
</dbReference>
<dbReference type="FunFam" id="3.30.980.10:FF:000005">
    <property type="entry name" value="Threonyl-tRNA synthetase, mitochondrial"/>
    <property type="match status" value="1"/>
</dbReference>
<dbReference type="Gene3D" id="3.10.20.30">
    <property type="match status" value="1"/>
</dbReference>
<dbReference type="Gene3D" id="3.30.54.20">
    <property type="match status" value="1"/>
</dbReference>
<dbReference type="Gene3D" id="3.40.50.800">
    <property type="entry name" value="Anticodon-binding domain"/>
    <property type="match status" value="1"/>
</dbReference>
<dbReference type="Gene3D" id="3.30.930.10">
    <property type="entry name" value="Bira Bifunctional Protein, Domain 2"/>
    <property type="match status" value="1"/>
</dbReference>
<dbReference type="Gene3D" id="3.30.980.10">
    <property type="entry name" value="Threonyl-trna Synthetase, Chain A, domain 2"/>
    <property type="match status" value="1"/>
</dbReference>
<dbReference type="HAMAP" id="MF_00184">
    <property type="entry name" value="Thr_tRNA_synth"/>
    <property type="match status" value="1"/>
</dbReference>
<dbReference type="InterPro" id="IPR002314">
    <property type="entry name" value="aa-tRNA-synt_IIb"/>
</dbReference>
<dbReference type="InterPro" id="IPR006195">
    <property type="entry name" value="aa-tRNA-synth_II"/>
</dbReference>
<dbReference type="InterPro" id="IPR045864">
    <property type="entry name" value="aa-tRNA-synth_II/BPL/LPL"/>
</dbReference>
<dbReference type="InterPro" id="IPR004154">
    <property type="entry name" value="Anticodon-bd"/>
</dbReference>
<dbReference type="InterPro" id="IPR036621">
    <property type="entry name" value="Anticodon-bd_dom_sf"/>
</dbReference>
<dbReference type="InterPro" id="IPR012675">
    <property type="entry name" value="Beta-grasp_dom_sf"/>
</dbReference>
<dbReference type="InterPro" id="IPR004095">
    <property type="entry name" value="TGS"/>
</dbReference>
<dbReference type="InterPro" id="IPR012676">
    <property type="entry name" value="TGS-like"/>
</dbReference>
<dbReference type="InterPro" id="IPR002320">
    <property type="entry name" value="Thr-tRNA-ligase_IIa"/>
</dbReference>
<dbReference type="InterPro" id="IPR018163">
    <property type="entry name" value="Thr/Ala-tRNA-synth_IIc_edit"/>
</dbReference>
<dbReference type="InterPro" id="IPR047246">
    <property type="entry name" value="ThrRS_anticodon"/>
</dbReference>
<dbReference type="InterPro" id="IPR033728">
    <property type="entry name" value="ThrRS_core"/>
</dbReference>
<dbReference type="InterPro" id="IPR012947">
    <property type="entry name" value="tRNA_SAD"/>
</dbReference>
<dbReference type="NCBIfam" id="TIGR00418">
    <property type="entry name" value="thrS"/>
    <property type="match status" value="1"/>
</dbReference>
<dbReference type="PANTHER" id="PTHR11451:SF44">
    <property type="entry name" value="THREONINE--TRNA LIGASE, CHLOROPLASTIC_MITOCHONDRIAL 2"/>
    <property type="match status" value="1"/>
</dbReference>
<dbReference type="PANTHER" id="PTHR11451">
    <property type="entry name" value="THREONINE-TRNA LIGASE"/>
    <property type="match status" value="1"/>
</dbReference>
<dbReference type="Pfam" id="PF03129">
    <property type="entry name" value="HGTP_anticodon"/>
    <property type="match status" value="1"/>
</dbReference>
<dbReference type="Pfam" id="PF02824">
    <property type="entry name" value="TGS"/>
    <property type="match status" value="1"/>
</dbReference>
<dbReference type="Pfam" id="PF00587">
    <property type="entry name" value="tRNA-synt_2b"/>
    <property type="match status" value="1"/>
</dbReference>
<dbReference type="Pfam" id="PF07973">
    <property type="entry name" value="tRNA_SAD"/>
    <property type="match status" value="1"/>
</dbReference>
<dbReference type="PRINTS" id="PR01047">
    <property type="entry name" value="TRNASYNTHTHR"/>
</dbReference>
<dbReference type="SMART" id="SM00863">
    <property type="entry name" value="tRNA_SAD"/>
    <property type="match status" value="1"/>
</dbReference>
<dbReference type="SUPFAM" id="SSF52954">
    <property type="entry name" value="Class II aaRS ABD-related"/>
    <property type="match status" value="1"/>
</dbReference>
<dbReference type="SUPFAM" id="SSF55681">
    <property type="entry name" value="Class II aaRS and biotin synthetases"/>
    <property type="match status" value="1"/>
</dbReference>
<dbReference type="SUPFAM" id="SSF81271">
    <property type="entry name" value="TGS-like"/>
    <property type="match status" value="1"/>
</dbReference>
<dbReference type="SUPFAM" id="SSF55186">
    <property type="entry name" value="ThrRS/AlaRS common domain"/>
    <property type="match status" value="1"/>
</dbReference>
<dbReference type="PROSITE" id="PS50862">
    <property type="entry name" value="AA_TRNA_LIGASE_II"/>
    <property type="match status" value="1"/>
</dbReference>
<dbReference type="PROSITE" id="PS51880">
    <property type="entry name" value="TGS"/>
    <property type="match status" value="1"/>
</dbReference>
<proteinExistence type="inferred from homology"/>
<keyword id="KW-0030">Aminoacyl-tRNA synthetase</keyword>
<keyword id="KW-0067">ATP-binding</keyword>
<keyword id="KW-0963">Cytoplasm</keyword>
<keyword id="KW-0436">Ligase</keyword>
<keyword id="KW-0479">Metal-binding</keyword>
<keyword id="KW-0547">Nucleotide-binding</keyword>
<keyword id="KW-0648">Protein biosynthesis</keyword>
<keyword id="KW-0694">RNA-binding</keyword>
<keyword id="KW-0820">tRNA-binding</keyword>
<keyword id="KW-0862">Zinc</keyword>
<name>SYT_JANMA</name>
<comment type="function">
    <text evidence="1">Catalyzes the attachment of threonine to tRNA(Thr) in a two-step reaction: L-threonine is first activated by ATP to form Thr-AMP and then transferred to the acceptor end of tRNA(Thr). Also edits incorrectly charged L-seryl-tRNA(Thr).</text>
</comment>
<comment type="catalytic activity">
    <reaction evidence="1">
        <text>tRNA(Thr) + L-threonine + ATP = L-threonyl-tRNA(Thr) + AMP + diphosphate + H(+)</text>
        <dbReference type="Rhea" id="RHEA:24624"/>
        <dbReference type="Rhea" id="RHEA-COMP:9670"/>
        <dbReference type="Rhea" id="RHEA-COMP:9704"/>
        <dbReference type="ChEBI" id="CHEBI:15378"/>
        <dbReference type="ChEBI" id="CHEBI:30616"/>
        <dbReference type="ChEBI" id="CHEBI:33019"/>
        <dbReference type="ChEBI" id="CHEBI:57926"/>
        <dbReference type="ChEBI" id="CHEBI:78442"/>
        <dbReference type="ChEBI" id="CHEBI:78534"/>
        <dbReference type="ChEBI" id="CHEBI:456215"/>
        <dbReference type="EC" id="6.1.1.3"/>
    </reaction>
</comment>
<comment type="cofactor">
    <cofactor evidence="1">
        <name>Zn(2+)</name>
        <dbReference type="ChEBI" id="CHEBI:29105"/>
    </cofactor>
    <text evidence="1">Binds 1 zinc ion per subunit.</text>
</comment>
<comment type="subunit">
    <text evidence="1">Homodimer.</text>
</comment>
<comment type="subcellular location">
    <subcellularLocation>
        <location evidence="1">Cytoplasm</location>
    </subcellularLocation>
</comment>
<comment type="similarity">
    <text evidence="1">Belongs to the class-II aminoacyl-tRNA synthetase family.</text>
</comment>
<evidence type="ECO:0000255" key="1">
    <source>
        <dbReference type="HAMAP-Rule" id="MF_00184"/>
    </source>
</evidence>
<evidence type="ECO:0000255" key="2">
    <source>
        <dbReference type="PROSITE-ProRule" id="PRU01228"/>
    </source>
</evidence>
<feature type="chain" id="PRO_1000020408" description="Threonine--tRNA ligase">
    <location>
        <begin position="1"/>
        <end position="635"/>
    </location>
</feature>
<feature type="domain" description="TGS" evidence="2">
    <location>
        <begin position="1"/>
        <end position="61"/>
    </location>
</feature>
<feature type="region of interest" description="Catalytic" evidence="1">
    <location>
        <begin position="242"/>
        <end position="533"/>
    </location>
</feature>
<feature type="binding site" evidence="1">
    <location>
        <position position="333"/>
    </location>
    <ligand>
        <name>Zn(2+)</name>
        <dbReference type="ChEBI" id="CHEBI:29105"/>
    </ligand>
</feature>
<feature type="binding site" evidence="1">
    <location>
        <position position="384"/>
    </location>
    <ligand>
        <name>Zn(2+)</name>
        <dbReference type="ChEBI" id="CHEBI:29105"/>
    </ligand>
</feature>
<feature type="binding site" evidence="1">
    <location>
        <position position="510"/>
    </location>
    <ligand>
        <name>Zn(2+)</name>
        <dbReference type="ChEBI" id="CHEBI:29105"/>
    </ligand>
</feature>
<protein>
    <recommendedName>
        <fullName evidence="1">Threonine--tRNA ligase</fullName>
        <ecNumber evidence="1">6.1.1.3</ecNumber>
    </recommendedName>
    <alternativeName>
        <fullName evidence="1">Threonyl-tRNA synthetase</fullName>
        <shortName evidence="1">ThrRS</shortName>
    </alternativeName>
</protein>
<sequence>MITVRLPDGSQREFDTPVTVAQVAANIGTGLAKAALAGKVNGDVVDTSYLIEKDSDLAIITDKDAEGIDVIRHSTAHLLAYAVKELFPDAQVTIGPVIDNGFYYDFSYKRPFTPEDLVAIEKKMTELAKKDEPVTRKVMPRDEAVAYFKSIGEAYKAEIIESIPADQEVSLYTEGKFTDLCRGPHVPSTGKLKVFKLMKLAGAYWRGDSKNEMLQRIYGTAWAKKEEQEAYLHMLEEAEKRDHRKLGKQLDFFHFQEEAPGLIFWHPKGWSIWQQVEQYMRKVYQDNDYQEVKAPQILDRGLWEKTGHWDNYRENMFVTESENRSYALKPMNCPGHVQIYNSDMRSYRDLPLRYGEFGQCHRNEPSGALHGMMRVRGFTQDDGHIFCTEEQIAEEVTAFHAQAMAVYAAFGFENIDVKLALRPDSRIGTEESWDIAEESLRSALRACGVSWTELPGEGAFYGPKIEYHLKDSLGRAWQVGTVQIDPSMPGRLGAEYVAVDNTRKTPIMLHRAIVGSLERFIGILIEHYAGALPLWLAPVQIAVLNISDAQAEYAQAVAQNLKKQGFRVHLDLRNEKITYKIREHSVQKLPYIIVIGDKERDAGTVAVRARGNVDLGVMPVDLLVDRLNSEIDAKA</sequence>
<gene>
    <name evidence="1" type="primary">thrS</name>
    <name type="ordered locus">mma_1487</name>
</gene>
<reference key="1">
    <citation type="journal article" date="2007" name="PLoS Genet.">
        <title>Genome analysis of Minibacterium massiliensis highlights the convergent evolution of water-living bacteria.</title>
        <authorList>
            <person name="Audic S."/>
            <person name="Robert C."/>
            <person name="Campagna B."/>
            <person name="Parinello H."/>
            <person name="Claverie J.-M."/>
            <person name="Raoult D."/>
            <person name="Drancourt M."/>
        </authorList>
    </citation>
    <scope>NUCLEOTIDE SEQUENCE [LARGE SCALE GENOMIC DNA]</scope>
    <source>
        <strain>Marseille</strain>
    </source>
</reference>
<accession>A6SY30</accession>